<proteinExistence type="inferred from homology"/>
<sequence length="212" mass="22958">MKKFTVAALALTTLLSGSAFAHEAGEFFMRAGPATVRPTEGAGGTLGHLNGFDVSNNTQLGLTFTYMATDNIGVELLAATPFRHKVGTGATGDIATVHLLPPTLMAQWYFGDSSSKVRPYVGVGVNYTTFFDNDFNDNGKNAGLSDLSFKDSWGAAGQVGVDYLINRDWLIGASVWYMDIDTTANYKMGGVQHHDSVRLDPWVFMFSAGYRF</sequence>
<name>OMPW_SALTY</name>
<comment type="subcellular location">
    <subcellularLocation>
        <location>Cell outer membrane</location>
    </subcellularLocation>
</comment>
<comment type="similarity">
    <text evidence="2">Belongs to the OmpW/AlkL family.</text>
</comment>
<dbReference type="EMBL" id="AE006468">
    <property type="protein sequence ID" value="AAL20650.1"/>
    <property type="molecule type" value="Genomic_DNA"/>
</dbReference>
<dbReference type="RefSeq" id="NP_460691.1">
    <property type="nucleotide sequence ID" value="NC_003197.2"/>
</dbReference>
<dbReference type="RefSeq" id="WP_000714799.1">
    <property type="nucleotide sequence ID" value="NC_003197.2"/>
</dbReference>
<dbReference type="SMR" id="Q8ZP50"/>
<dbReference type="STRING" id="99287.STM1732"/>
<dbReference type="TCDB" id="1.B.39.1.1">
    <property type="family name" value="the bacterial porin, ompw (ompw) family"/>
</dbReference>
<dbReference type="PaxDb" id="99287-STM1732"/>
<dbReference type="GeneID" id="1253251"/>
<dbReference type="KEGG" id="stm:STM1732"/>
<dbReference type="PATRIC" id="fig|99287.12.peg.1828"/>
<dbReference type="HOGENOM" id="CLU_042505_1_1_6"/>
<dbReference type="OMA" id="GMDYMLT"/>
<dbReference type="PhylomeDB" id="Q8ZP50"/>
<dbReference type="BioCyc" id="SENT99287:STM1732-MONOMER"/>
<dbReference type="Proteomes" id="UP000001014">
    <property type="component" value="Chromosome"/>
</dbReference>
<dbReference type="GO" id="GO:0009279">
    <property type="term" value="C:cell outer membrane"/>
    <property type="evidence" value="ECO:0000318"/>
    <property type="project" value="GO_Central"/>
</dbReference>
<dbReference type="GO" id="GO:0055085">
    <property type="term" value="P:transmembrane transport"/>
    <property type="evidence" value="ECO:0000318"/>
    <property type="project" value="GO_Central"/>
</dbReference>
<dbReference type="FunFam" id="2.40.160.20:FF:000001">
    <property type="entry name" value="Outer membrane protein W"/>
    <property type="match status" value="1"/>
</dbReference>
<dbReference type="Gene3D" id="2.40.160.20">
    <property type="match status" value="1"/>
</dbReference>
<dbReference type="InterPro" id="IPR011250">
    <property type="entry name" value="OMP/PagP_b-brl"/>
</dbReference>
<dbReference type="InterPro" id="IPR005618">
    <property type="entry name" value="OMPW"/>
</dbReference>
<dbReference type="NCBIfam" id="NF008202">
    <property type="entry name" value="PRK10959.1"/>
    <property type="match status" value="1"/>
</dbReference>
<dbReference type="PANTHER" id="PTHR36920">
    <property type="match status" value="1"/>
</dbReference>
<dbReference type="PANTHER" id="PTHR36920:SF1">
    <property type="entry name" value="OUTER MEMBRANE PROTEIN W"/>
    <property type="match status" value="1"/>
</dbReference>
<dbReference type="Pfam" id="PF03922">
    <property type="entry name" value="OmpW"/>
    <property type="match status" value="1"/>
</dbReference>
<dbReference type="SUPFAM" id="SSF56925">
    <property type="entry name" value="OMPA-like"/>
    <property type="match status" value="1"/>
</dbReference>
<gene>
    <name type="primary">ompW</name>
    <name type="ordered locus">STM1732</name>
</gene>
<organism>
    <name type="scientific">Salmonella typhimurium (strain LT2 / SGSC1412 / ATCC 700720)</name>
    <dbReference type="NCBI Taxonomy" id="99287"/>
    <lineage>
        <taxon>Bacteria</taxon>
        <taxon>Pseudomonadati</taxon>
        <taxon>Pseudomonadota</taxon>
        <taxon>Gammaproteobacteria</taxon>
        <taxon>Enterobacterales</taxon>
        <taxon>Enterobacteriaceae</taxon>
        <taxon>Salmonella</taxon>
    </lineage>
</organism>
<reference key="1">
    <citation type="journal article" date="2001" name="Nature">
        <title>Complete genome sequence of Salmonella enterica serovar Typhimurium LT2.</title>
        <authorList>
            <person name="McClelland M."/>
            <person name="Sanderson K.E."/>
            <person name="Spieth J."/>
            <person name="Clifton S.W."/>
            <person name="Latreille P."/>
            <person name="Courtney L."/>
            <person name="Porwollik S."/>
            <person name="Ali J."/>
            <person name="Dante M."/>
            <person name="Du F."/>
            <person name="Hou S."/>
            <person name="Layman D."/>
            <person name="Leonard S."/>
            <person name="Nguyen C."/>
            <person name="Scott K."/>
            <person name="Holmes A."/>
            <person name="Grewal N."/>
            <person name="Mulvaney E."/>
            <person name="Ryan E."/>
            <person name="Sun H."/>
            <person name="Florea L."/>
            <person name="Miller W."/>
            <person name="Stoneking T."/>
            <person name="Nhan M."/>
            <person name="Waterston R."/>
            <person name="Wilson R.K."/>
        </authorList>
    </citation>
    <scope>NUCLEOTIDE SEQUENCE [LARGE SCALE GENOMIC DNA]</scope>
    <source>
        <strain>LT2 / SGSC1412 / ATCC 700720</strain>
    </source>
</reference>
<accession>Q8ZP50</accession>
<feature type="signal peptide" evidence="1">
    <location>
        <begin position="1"/>
        <end position="21"/>
    </location>
</feature>
<feature type="chain" id="PRO_0000020192" description="Outer membrane protein W">
    <location>
        <begin position="22"/>
        <end position="212"/>
    </location>
</feature>
<evidence type="ECO:0000250" key="1"/>
<evidence type="ECO:0000305" key="2"/>
<keyword id="KW-0998">Cell outer membrane</keyword>
<keyword id="KW-0472">Membrane</keyword>
<keyword id="KW-1185">Reference proteome</keyword>
<keyword id="KW-0732">Signal</keyword>
<keyword id="KW-0812">Transmembrane</keyword>
<keyword id="KW-1134">Transmembrane beta strand</keyword>
<protein>
    <recommendedName>
        <fullName>Outer membrane protein W</fullName>
    </recommendedName>
</protein>